<proteinExistence type="evidence at protein level"/>
<organism>
    <name type="scientific">Cucurbita pepo</name>
    <name type="common">Vegetable marrow</name>
    <name type="synonym">Summer squash</name>
    <dbReference type="NCBI Taxonomy" id="3663"/>
    <lineage>
        <taxon>Eukaryota</taxon>
        <taxon>Viridiplantae</taxon>
        <taxon>Streptophyta</taxon>
        <taxon>Embryophyta</taxon>
        <taxon>Tracheophyta</taxon>
        <taxon>Spermatophyta</taxon>
        <taxon>Magnoliopsida</taxon>
        <taxon>eudicotyledons</taxon>
        <taxon>Gunneridae</taxon>
        <taxon>Pentapetalae</taxon>
        <taxon>rosids</taxon>
        <taxon>fabids</taxon>
        <taxon>Cucurbitales</taxon>
        <taxon>Cucurbitaceae</taxon>
        <taxon>Cucurbiteae</taxon>
        <taxon>Cucurbita</taxon>
    </lineage>
</organism>
<feature type="peptide" id="PRO_0000033199" description="Trypsin inhibitor 3">
    <location>
        <begin position="1"/>
        <end position="32"/>
    </location>
</feature>
<feature type="peptide" id="PRO_0000033200" description="Trypsin inhibitor 2">
    <location>
        <begin position="4"/>
        <end position="32"/>
    </location>
</feature>
<feature type="site" description="Reactive bond">
    <location>
        <begin position="8"/>
        <end position="9"/>
    </location>
</feature>
<feature type="disulfide bond" evidence="1">
    <location>
        <begin position="6"/>
        <end position="23"/>
    </location>
</feature>
<feature type="disulfide bond" evidence="1">
    <location>
        <begin position="13"/>
        <end position="25"/>
    </location>
</feature>
<feature type="disulfide bond" evidence="1">
    <location>
        <begin position="19"/>
        <end position="31"/>
    </location>
</feature>
<feature type="helix" evidence="3">
    <location>
        <begin position="16"/>
        <end position="18"/>
    </location>
</feature>
<feature type="strand" evidence="4">
    <location>
        <begin position="24"/>
        <end position="26"/>
    </location>
</feature>
<feature type="strand" evidence="3">
    <location>
        <begin position="29"/>
        <end position="32"/>
    </location>
</feature>
<protein>
    <recommendedName>
        <fullName>Trypsin inhibitor 3</fullName>
    </recommendedName>
    <alternativeName>
        <fullName>CPTI-III</fullName>
    </alternativeName>
    <alternativeName>
        <fullName>Trypsin inhibitor III</fullName>
    </alternativeName>
    <component>
        <recommendedName>
            <fullName>Trypsin inhibitor 2</fullName>
        </recommendedName>
        <alternativeName>
            <fullName>CPTI-II</fullName>
        </alternativeName>
        <alternativeName>
            <fullName>Trypsin inhibitor II</fullName>
        </alternativeName>
    </component>
</protein>
<keyword id="KW-0002">3D-structure</keyword>
<keyword id="KW-0903">Direct protein sequencing</keyword>
<keyword id="KW-1015">Disulfide bond</keyword>
<keyword id="KW-0960">Knottin</keyword>
<keyword id="KW-0646">Protease inhibitor</keyword>
<keyword id="KW-0964">Secreted</keyword>
<keyword id="KW-0722">Serine protease inhibitor</keyword>
<accession>P10293</accession>
<evidence type="ECO:0000250" key="1"/>
<evidence type="ECO:0000305" key="2"/>
<evidence type="ECO:0007829" key="3">
    <source>
        <dbReference type="PDB" id="2BTC"/>
    </source>
</evidence>
<evidence type="ECO:0007829" key="4">
    <source>
        <dbReference type="PDB" id="2STB"/>
    </source>
</evidence>
<comment type="function">
    <text>Inhibits trypsin.</text>
</comment>
<comment type="subcellular location">
    <subcellularLocation>
        <location>Secreted</location>
    </subcellularLocation>
</comment>
<comment type="domain">
    <text evidence="1">The presence of a 'disulfide through disulfide knot' structurally defines this protein as a knottin.</text>
</comment>
<comment type="similarity">
    <text evidence="2">Belongs to the protease inhibitor I7 (squash-type serine protease inhibitor) family.</text>
</comment>
<reference key="1">
    <citation type="journal article" date="1985" name="Biochem. Biophys. Res. Commun.">
        <title>The squash family of serine proteinase inhibitors. Amino acid sequences and association equilibrium constants of inhibitors from squash, summer squash, zucchini, and cucumber seeds.</title>
        <authorList>
            <person name="Wieczorek M."/>
            <person name="Otlewski J."/>
            <person name="Cook J."/>
            <person name="Parks K."/>
            <person name="Leluk J."/>
            <person name="Wilimowska-Pelc A."/>
            <person name="Polanowski A."/>
            <person name="Wilusz T."/>
            <person name="Laskowski M. Jr."/>
        </authorList>
    </citation>
    <scope>PROTEIN SEQUENCE</scope>
    <source>
        <tissue>Seed</tissue>
    </source>
</reference>
<sequence>HEERVCPKILMECKKDSDCLAECICLEHGYCG</sequence>
<name>ITR3_CUCPE</name>
<dbReference type="PDB" id="2BTC">
    <property type="method" value="X-ray"/>
    <property type="resolution" value="1.50 A"/>
    <property type="chains" value="I=4-32"/>
</dbReference>
<dbReference type="PDB" id="2STB">
    <property type="method" value="X-ray"/>
    <property type="resolution" value="1.80 A"/>
    <property type="chains" value="I=4-32"/>
</dbReference>
<dbReference type="PDBsum" id="2BTC"/>
<dbReference type="PDBsum" id="2STB"/>
<dbReference type="SMR" id="P10293"/>
<dbReference type="MEROPS" id="I07.006"/>
<dbReference type="EvolutionaryTrace" id="P10293"/>
<dbReference type="GO" id="GO:0005576">
    <property type="term" value="C:extracellular region"/>
    <property type="evidence" value="ECO:0007669"/>
    <property type="project" value="UniProtKB-SubCell"/>
</dbReference>
<dbReference type="GO" id="GO:0004867">
    <property type="term" value="F:serine-type endopeptidase inhibitor activity"/>
    <property type="evidence" value="ECO:0007669"/>
    <property type="project" value="UniProtKB-KW"/>
</dbReference>
<dbReference type="CDD" id="cd00150">
    <property type="entry name" value="PlantTI"/>
    <property type="match status" value="1"/>
</dbReference>
<dbReference type="Gene3D" id="4.10.75.20">
    <property type="match status" value="1"/>
</dbReference>
<dbReference type="InterPro" id="IPR000737">
    <property type="entry name" value="Prot_inh_squash"/>
</dbReference>
<dbReference type="InterPro" id="IPR011052">
    <property type="entry name" value="Proteinase_amylase_inhib_sf"/>
</dbReference>
<dbReference type="Pfam" id="PF00299">
    <property type="entry name" value="Squash"/>
    <property type="match status" value="1"/>
</dbReference>
<dbReference type="PRINTS" id="PR00293">
    <property type="entry name" value="SQUASHINHBTR"/>
</dbReference>
<dbReference type="SMART" id="SM00286">
    <property type="entry name" value="PTI"/>
    <property type="match status" value="1"/>
</dbReference>
<dbReference type="SUPFAM" id="SSF57027">
    <property type="entry name" value="Plant inhibitors of proteinases and amylases"/>
    <property type="match status" value="1"/>
</dbReference>
<dbReference type="PROSITE" id="PS00286">
    <property type="entry name" value="SQUASH_INHIBITOR"/>
    <property type="match status" value="1"/>
</dbReference>